<sequence length="390" mass="45600">MSQSTIESTNKKEINKGKAPAKETILSPRFYTTDFEAMENMDLSINEEELEAICEEFRKDYNRHHFVRNSEFEGAAEKLDPETRELFVDFLEGSCTSEFSGFLLYKELSKRIKDKNPLLAECFAHMARDEARHAGFLNKSMSDFGLQLDLGFLTANKDYTYFPPRSIFYATYLSEKIGYWRYIAIYRHLEKNPNSKIFPLFNYFENWCQDENRHGDFFDALMKAQPRTVKSLSQKITIGGSTFTHPLFDYFHRFRYFLNNLPLTSKLWSRFFLLAVFATMYARDLGIKKDFYSSLGLDARDYDQFVINKTNETAARVFPVVMDVNNKSFYGRLDKIVENNKILSDIASGTGNKVSKTFRKVPKYLSNGYQLLRLYLLKPLDSKDYQPSIR</sequence>
<evidence type="ECO:0000255" key="1">
    <source>
        <dbReference type="HAMAP-Rule" id="MF_01840"/>
    </source>
</evidence>
<evidence type="ECO:0000256" key="2">
    <source>
        <dbReference type="SAM" id="MobiDB-lite"/>
    </source>
</evidence>
<protein>
    <recommendedName>
        <fullName evidence="1">Magnesium-protoporphyrin IX monomethyl ester [oxidative] cyclase</fullName>
        <shortName evidence="1">Mg-protoporphyrin IX monomethyl ester oxidative cyclase</shortName>
        <ecNumber evidence="1">1.14.13.81</ecNumber>
    </recommendedName>
</protein>
<dbReference type="EC" id="1.14.13.81" evidence="1"/>
<dbReference type="EMBL" id="CP000576">
    <property type="protein sequence ID" value="ABO17647.1"/>
    <property type="molecule type" value="Genomic_DNA"/>
</dbReference>
<dbReference type="RefSeq" id="WP_011862989.1">
    <property type="nucleotide sequence ID" value="NC_009091.1"/>
</dbReference>
<dbReference type="STRING" id="167546.P9301_10241"/>
<dbReference type="KEGG" id="pmg:P9301_10241"/>
<dbReference type="eggNOG" id="COG1633">
    <property type="taxonomic scope" value="Bacteria"/>
</dbReference>
<dbReference type="HOGENOM" id="CLU_048037_0_0_3"/>
<dbReference type="OrthoDB" id="141643at2"/>
<dbReference type="UniPathway" id="UPA00670"/>
<dbReference type="Proteomes" id="UP000001430">
    <property type="component" value="Chromosome"/>
</dbReference>
<dbReference type="GO" id="GO:0005506">
    <property type="term" value="F:iron ion binding"/>
    <property type="evidence" value="ECO:0007669"/>
    <property type="project" value="UniProtKB-UniRule"/>
</dbReference>
<dbReference type="GO" id="GO:0048529">
    <property type="term" value="F:magnesium-protoporphyrin IX monomethyl ester (oxidative) cyclase activity"/>
    <property type="evidence" value="ECO:0007669"/>
    <property type="project" value="UniProtKB-UniRule"/>
</dbReference>
<dbReference type="GO" id="GO:0036068">
    <property type="term" value="P:light-independent chlorophyll biosynthetic process"/>
    <property type="evidence" value="ECO:0007669"/>
    <property type="project" value="UniProtKB-UniRule"/>
</dbReference>
<dbReference type="GO" id="GO:0015979">
    <property type="term" value="P:photosynthesis"/>
    <property type="evidence" value="ECO:0007669"/>
    <property type="project" value="UniProtKB-UniRule"/>
</dbReference>
<dbReference type="HAMAP" id="MF_01840">
    <property type="entry name" value="AcsF"/>
    <property type="match status" value="1"/>
</dbReference>
<dbReference type="InterPro" id="IPR008434">
    <property type="entry name" value="AcsF"/>
</dbReference>
<dbReference type="InterPro" id="IPR009078">
    <property type="entry name" value="Ferritin-like_SF"/>
</dbReference>
<dbReference type="InterPro" id="IPR003251">
    <property type="entry name" value="Rr_diiron-bd_dom"/>
</dbReference>
<dbReference type="NCBIfam" id="TIGR02029">
    <property type="entry name" value="AcsF"/>
    <property type="match status" value="1"/>
</dbReference>
<dbReference type="NCBIfam" id="NF010172">
    <property type="entry name" value="PRK13654.1"/>
    <property type="match status" value="1"/>
</dbReference>
<dbReference type="PANTHER" id="PTHR31053">
    <property type="entry name" value="MAGNESIUM-PROTOPORPHYRIN IX MONOMETHYL ESTER [OXIDATIVE] CYCLASE, CHLOROPLASTIC"/>
    <property type="match status" value="1"/>
</dbReference>
<dbReference type="PANTHER" id="PTHR31053:SF2">
    <property type="entry name" value="MAGNESIUM-PROTOPORPHYRIN IX MONOMETHYL ESTER [OXIDATIVE] CYCLASE, CHLOROPLASTIC"/>
    <property type="match status" value="1"/>
</dbReference>
<dbReference type="Pfam" id="PF02915">
    <property type="entry name" value="Rubrerythrin"/>
    <property type="match status" value="1"/>
</dbReference>
<dbReference type="SUPFAM" id="SSF47240">
    <property type="entry name" value="Ferritin-like"/>
    <property type="match status" value="1"/>
</dbReference>
<keyword id="KW-0149">Chlorophyll biosynthesis</keyword>
<keyword id="KW-0408">Iron</keyword>
<keyword id="KW-0479">Metal-binding</keyword>
<keyword id="KW-0521">NADP</keyword>
<keyword id="KW-0560">Oxidoreductase</keyword>
<keyword id="KW-0602">Photosynthesis</keyword>
<keyword id="KW-1185">Reference proteome</keyword>
<feature type="chain" id="PRO_1000070545" description="Magnesium-protoporphyrin IX monomethyl ester [oxidative] cyclase">
    <location>
        <begin position="1"/>
        <end position="390"/>
    </location>
</feature>
<feature type="region of interest" description="Disordered" evidence="2">
    <location>
        <begin position="1"/>
        <end position="20"/>
    </location>
</feature>
<proteinExistence type="inferred from homology"/>
<comment type="function">
    <text evidence="1">Catalyzes the formation of the isocyclic ring in chlorophyll biosynthesis. Mediates the cyclase reaction, which results in the formation of divinylprotochlorophyllide (Pchlide) characteristic of all chlorophylls from magnesium-protoporphyrin IX 13-monomethyl ester (MgPMME).</text>
</comment>
<comment type="catalytic activity">
    <reaction evidence="1">
        <text>Mg-protoporphyrin IX 13-monomethyl ester + 3 NADPH + 3 O2 + 2 H(+) = 3,8-divinyl protochlorophyllide a + 3 NADP(+) + 5 H2O</text>
        <dbReference type="Rhea" id="RHEA:33235"/>
        <dbReference type="ChEBI" id="CHEBI:15377"/>
        <dbReference type="ChEBI" id="CHEBI:15378"/>
        <dbReference type="ChEBI" id="CHEBI:15379"/>
        <dbReference type="ChEBI" id="CHEBI:57783"/>
        <dbReference type="ChEBI" id="CHEBI:58349"/>
        <dbReference type="ChEBI" id="CHEBI:58632"/>
        <dbReference type="ChEBI" id="CHEBI:60491"/>
        <dbReference type="EC" id="1.14.13.81"/>
    </reaction>
</comment>
<comment type="cofactor">
    <cofactor evidence="1">
        <name>Fe cation</name>
        <dbReference type="ChEBI" id="CHEBI:24875"/>
    </cofactor>
</comment>
<comment type="pathway">
    <text evidence="1">Porphyrin-containing compound metabolism; chlorophyll biosynthesis (light-independent).</text>
</comment>
<comment type="similarity">
    <text evidence="1">Belongs to the AcsF family.</text>
</comment>
<organism>
    <name type="scientific">Prochlorococcus marinus (strain MIT 9301)</name>
    <dbReference type="NCBI Taxonomy" id="167546"/>
    <lineage>
        <taxon>Bacteria</taxon>
        <taxon>Bacillati</taxon>
        <taxon>Cyanobacteriota</taxon>
        <taxon>Cyanophyceae</taxon>
        <taxon>Synechococcales</taxon>
        <taxon>Prochlorococcaceae</taxon>
        <taxon>Prochlorococcus</taxon>
    </lineage>
</organism>
<reference key="1">
    <citation type="journal article" date="2007" name="PLoS Genet.">
        <title>Patterns and implications of gene gain and loss in the evolution of Prochlorococcus.</title>
        <authorList>
            <person name="Kettler G.C."/>
            <person name="Martiny A.C."/>
            <person name="Huang K."/>
            <person name="Zucker J."/>
            <person name="Coleman M.L."/>
            <person name="Rodrigue S."/>
            <person name="Chen F."/>
            <person name="Lapidus A."/>
            <person name="Ferriera S."/>
            <person name="Johnson J."/>
            <person name="Steglich C."/>
            <person name="Church G.M."/>
            <person name="Richardson P."/>
            <person name="Chisholm S.W."/>
        </authorList>
    </citation>
    <scope>NUCLEOTIDE SEQUENCE [LARGE SCALE GENOMIC DNA]</scope>
    <source>
        <strain>MIT 9301</strain>
    </source>
</reference>
<accession>A3PD22</accession>
<gene>
    <name evidence="1" type="primary">acsF</name>
    <name type="ordered locus">P9301_10241</name>
</gene>
<name>ACSF_PROM0</name>